<name>YGIB_ECOLC</name>
<feature type="chain" id="PRO_1000085467" description="UPF0441 protein YgiB">
    <location>
        <begin position="1"/>
        <end position="223"/>
    </location>
</feature>
<feature type="region of interest" description="Disordered" evidence="2">
    <location>
        <begin position="178"/>
        <end position="223"/>
    </location>
</feature>
<feature type="compositionally biased region" description="Low complexity" evidence="2">
    <location>
        <begin position="178"/>
        <end position="195"/>
    </location>
</feature>
<feature type="compositionally biased region" description="Polar residues" evidence="2">
    <location>
        <begin position="204"/>
        <end position="223"/>
    </location>
</feature>
<accession>B1ISC0</accession>
<proteinExistence type="inferred from homology"/>
<gene>
    <name evidence="1" type="primary">ygiB</name>
    <name type="ordered locus">EcolC_0661</name>
</gene>
<dbReference type="EMBL" id="CP000946">
    <property type="protein sequence ID" value="ACA76337.1"/>
    <property type="molecule type" value="Genomic_DNA"/>
</dbReference>
<dbReference type="RefSeq" id="WP_000831538.1">
    <property type="nucleotide sequence ID" value="NC_010468.1"/>
</dbReference>
<dbReference type="SMR" id="B1ISC0"/>
<dbReference type="KEGG" id="ecl:EcolC_0661"/>
<dbReference type="HOGENOM" id="CLU_095624_0_0_6"/>
<dbReference type="HAMAP" id="MF_01188">
    <property type="entry name" value="UPF0441"/>
    <property type="match status" value="1"/>
</dbReference>
<dbReference type="InterPro" id="IPR009576">
    <property type="entry name" value="Biofilm_formation_YgiB"/>
</dbReference>
<dbReference type="NCBIfam" id="NF008655">
    <property type="entry name" value="PRK11653.1"/>
    <property type="match status" value="1"/>
</dbReference>
<dbReference type="Pfam" id="PF06693">
    <property type="entry name" value="DUF1190"/>
    <property type="match status" value="1"/>
</dbReference>
<sequence>MKRTKSIRHASFRKNWSARHLTPVALAVATVFMLAGCEKSDETVSLYQNADDCSAANPGKSAECTTAYNNALKEAERTAPKYATREDCVAEFGEGQCQQAPAQAGMAPENQAQAQQSSGSFWMPLMAGYMMGRLMGGGAGFAQQPLFSSKNPASPAYGKYTDATGKNYGAAQPGRTMTVPKTAMAPKPATTTTVTRGGFGESVAKQSTLQRSATGTSSRSMGG</sequence>
<organism>
    <name type="scientific">Escherichia coli (strain ATCC 8739 / DSM 1576 / NBRC 3972 / NCIMB 8545 / WDCM 00012 / Crooks)</name>
    <dbReference type="NCBI Taxonomy" id="481805"/>
    <lineage>
        <taxon>Bacteria</taxon>
        <taxon>Pseudomonadati</taxon>
        <taxon>Pseudomonadota</taxon>
        <taxon>Gammaproteobacteria</taxon>
        <taxon>Enterobacterales</taxon>
        <taxon>Enterobacteriaceae</taxon>
        <taxon>Escherichia</taxon>
    </lineage>
</organism>
<protein>
    <recommendedName>
        <fullName evidence="1">UPF0441 protein YgiB</fullName>
    </recommendedName>
</protein>
<evidence type="ECO:0000255" key="1">
    <source>
        <dbReference type="HAMAP-Rule" id="MF_01188"/>
    </source>
</evidence>
<evidence type="ECO:0000256" key="2">
    <source>
        <dbReference type="SAM" id="MobiDB-lite"/>
    </source>
</evidence>
<reference key="1">
    <citation type="submission" date="2008-02" db="EMBL/GenBank/DDBJ databases">
        <title>Complete sequence of Escherichia coli C str. ATCC 8739.</title>
        <authorList>
            <person name="Copeland A."/>
            <person name="Lucas S."/>
            <person name="Lapidus A."/>
            <person name="Glavina del Rio T."/>
            <person name="Dalin E."/>
            <person name="Tice H."/>
            <person name="Bruce D."/>
            <person name="Goodwin L."/>
            <person name="Pitluck S."/>
            <person name="Kiss H."/>
            <person name="Brettin T."/>
            <person name="Detter J.C."/>
            <person name="Han C."/>
            <person name="Kuske C.R."/>
            <person name="Schmutz J."/>
            <person name="Larimer F."/>
            <person name="Land M."/>
            <person name="Hauser L."/>
            <person name="Kyrpides N."/>
            <person name="Mikhailova N."/>
            <person name="Ingram L."/>
            <person name="Richardson P."/>
        </authorList>
    </citation>
    <scope>NUCLEOTIDE SEQUENCE [LARGE SCALE GENOMIC DNA]</scope>
    <source>
        <strain>ATCC 8739 / DSM 1576 / NBRC 3972 / NCIMB 8545 / WDCM 00012 / Crooks</strain>
    </source>
</reference>
<comment type="similarity">
    <text evidence="1">Belongs to the UPF0441 family.</text>
</comment>